<protein>
    <recommendedName>
        <fullName>Gastrin</fullName>
    </recommendedName>
    <component>
        <recommendedName>
            <fullName>Big gastrin</fullName>
        </recommendedName>
        <alternativeName>
            <fullName>Gastrin-34</fullName>
            <shortName>G34</shortName>
        </alternativeName>
    </component>
    <component>
        <recommendedName>
            <fullName>Gastrin</fullName>
        </recommendedName>
    </component>
</protein>
<organism>
    <name type="scientific">Canis lupus familiaris</name>
    <name type="common">Dog</name>
    <name type="synonym">Canis familiaris</name>
    <dbReference type="NCBI Taxonomy" id="9615"/>
    <lineage>
        <taxon>Eukaryota</taxon>
        <taxon>Metazoa</taxon>
        <taxon>Chordata</taxon>
        <taxon>Craniata</taxon>
        <taxon>Vertebrata</taxon>
        <taxon>Euteleostomi</taxon>
        <taxon>Mammalia</taxon>
        <taxon>Eutheria</taxon>
        <taxon>Laurasiatheria</taxon>
        <taxon>Carnivora</taxon>
        <taxon>Caniformia</taxon>
        <taxon>Canidae</taxon>
        <taxon>Canis</taxon>
    </lineage>
</organism>
<sequence>MQRLCVYVLILALALATFSEASWKPRSRLQDAPSGPGANRGLEPHGLDQLGPASHHRRQLGLQGPPQLVADLSKKQGPWMEEEEAAYGWMDFGRRSAEEGDQRP</sequence>
<comment type="function">
    <text>Gastrin stimulates the stomach mucosa to produce and secrete hydrochloric acid and the pancreas to secrete its digestive enzymes. It also stimulates smooth muscle contraction and increases blood circulation and water secretion in the stomach and intestine.</text>
</comment>
<comment type="subcellular location">
    <subcellularLocation>
        <location>Secreted</location>
    </subcellularLocation>
</comment>
<comment type="similarity">
    <text evidence="5">Belongs to the gastrin/cholecystokinin family.</text>
</comment>
<dbReference type="PIR" id="B61053">
    <property type="entry name" value="GMDG"/>
</dbReference>
<dbReference type="RefSeq" id="XP_003435286.1">
    <property type="nucleotide sequence ID" value="XM_003435238.5"/>
</dbReference>
<dbReference type="RefSeq" id="XP_038402027.1">
    <property type="nucleotide sequence ID" value="XM_038546099.1"/>
</dbReference>
<dbReference type="RefSeq" id="XP_038531116.1">
    <property type="nucleotide sequence ID" value="XM_038675188.1"/>
</dbReference>
<dbReference type="STRING" id="9615.ENSCAFP00000023420"/>
<dbReference type="iPTMnet" id="P01353"/>
<dbReference type="PaxDb" id="9612-ENSCAFP00000023420"/>
<dbReference type="Ensembl" id="ENSCAFT00000025228.5">
    <property type="protein sequence ID" value="ENSCAFP00000023420.3"/>
    <property type="gene ID" value="ENSCAFG00000015924.5"/>
</dbReference>
<dbReference type="Ensembl" id="ENSCAFT00030035728.1">
    <property type="protein sequence ID" value="ENSCAFP00030031159.1"/>
    <property type="gene ID" value="ENSCAFG00030019442.1"/>
</dbReference>
<dbReference type="Ensembl" id="ENSCAFT00040019141.1">
    <property type="protein sequence ID" value="ENSCAFP00040016613.1"/>
    <property type="gene ID" value="ENSCAFG00040010324.1"/>
</dbReference>
<dbReference type="Ensembl" id="ENSCAFT00845021253.1">
    <property type="protein sequence ID" value="ENSCAFP00845016712.1"/>
    <property type="gene ID" value="ENSCAFG00845011939.1"/>
</dbReference>
<dbReference type="GeneID" id="100685087"/>
<dbReference type="KEGG" id="cfa:100685087"/>
<dbReference type="CTD" id="2520"/>
<dbReference type="VEuPathDB" id="HostDB:ENSCAFG00845011939"/>
<dbReference type="VGNC" id="VGNC:41121">
    <property type="gene designation" value="GAST"/>
</dbReference>
<dbReference type="eggNOG" id="ENOG502SA9S">
    <property type="taxonomic scope" value="Eukaryota"/>
</dbReference>
<dbReference type="GeneTree" id="ENSGT00390000014792"/>
<dbReference type="HOGENOM" id="CLU_2249245_0_0_1"/>
<dbReference type="InParanoid" id="P01353"/>
<dbReference type="OMA" id="WKPRSQL"/>
<dbReference type="OrthoDB" id="9924917at2759"/>
<dbReference type="TreeFam" id="TF336994"/>
<dbReference type="Reactome" id="R-CFA-416476">
    <property type="pathway name" value="G alpha (q) signalling events"/>
</dbReference>
<dbReference type="Reactome" id="R-CFA-881907">
    <property type="pathway name" value="Gastrin-CREB signalling pathway via PKC and MAPK"/>
</dbReference>
<dbReference type="Proteomes" id="UP000002254">
    <property type="component" value="Chromosome 9"/>
</dbReference>
<dbReference type="Proteomes" id="UP000694429">
    <property type="component" value="Chromosome 9"/>
</dbReference>
<dbReference type="Proteomes" id="UP000694542">
    <property type="component" value="Chromosome 9"/>
</dbReference>
<dbReference type="Proteomes" id="UP000805418">
    <property type="component" value="Chromosome 9"/>
</dbReference>
<dbReference type="Bgee" id="ENSCAFG00000015924">
    <property type="expression patterns" value="Expressed in thymus and 5 other cell types or tissues"/>
</dbReference>
<dbReference type="GO" id="GO:0005615">
    <property type="term" value="C:extracellular space"/>
    <property type="evidence" value="ECO:0000318"/>
    <property type="project" value="GO_Central"/>
</dbReference>
<dbReference type="GO" id="GO:0005179">
    <property type="term" value="F:hormone activity"/>
    <property type="evidence" value="ECO:0000318"/>
    <property type="project" value="GO_Central"/>
</dbReference>
<dbReference type="GO" id="GO:0007186">
    <property type="term" value="P:G protein-coupled receptor signaling pathway"/>
    <property type="evidence" value="ECO:0000318"/>
    <property type="project" value="GO_Central"/>
</dbReference>
<dbReference type="GO" id="GO:0032094">
    <property type="term" value="P:response to food"/>
    <property type="evidence" value="ECO:0000318"/>
    <property type="project" value="GO_Central"/>
</dbReference>
<dbReference type="InterPro" id="IPR039236">
    <property type="entry name" value="GAST"/>
</dbReference>
<dbReference type="InterPro" id="IPR001651">
    <property type="entry name" value="Gastrin/CCK"/>
</dbReference>
<dbReference type="InterPro" id="IPR013152">
    <property type="entry name" value="Gastrin/cholecystokinin_CS"/>
</dbReference>
<dbReference type="PANTHER" id="PTHR19309">
    <property type="entry name" value="GASTRIN"/>
    <property type="match status" value="1"/>
</dbReference>
<dbReference type="PANTHER" id="PTHR19309:SF0">
    <property type="entry name" value="GASTRIN"/>
    <property type="match status" value="1"/>
</dbReference>
<dbReference type="Pfam" id="PF00918">
    <property type="entry name" value="Gastrin"/>
    <property type="match status" value="1"/>
</dbReference>
<dbReference type="PROSITE" id="PS00259">
    <property type="entry name" value="GASTRIN"/>
    <property type="match status" value="1"/>
</dbReference>
<keyword id="KW-0027">Amidation</keyword>
<keyword id="KW-0165">Cleavage on pair of basic residues</keyword>
<keyword id="KW-0903">Direct protein sequencing</keyword>
<keyword id="KW-0372">Hormone</keyword>
<keyword id="KW-0597">Phosphoprotein</keyword>
<keyword id="KW-0873">Pyrrolidone carboxylic acid</keyword>
<keyword id="KW-1185">Reference proteome</keyword>
<keyword id="KW-0964">Secreted</keyword>
<keyword id="KW-0732">Signal</keyword>
<keyword id="KW-0765">Sulfation</keyword>
<accession>P01353</accession>
<reference key="1">
    <citation type="journal article" date="1990" name="Digestion">
        <title>Cloning of canine gastrin cDNA's encoding variant amino acid sequences.</title>
        <authorList>
            <person name="Gantz I."/>
            <person name="Takeuchi T."/>
            <person name="Yamada T."/>
        </authorList>
    </citation>
    <scope>NUCLEOTIDE SEQUENCE [MRNA]</scope>
    <source>
        <tissue>Gastric mucosa</tissue>
    </source>
</reference>
<reference key="2">
    <citation type="journal article" date="1986" name="Peptides">
        <title>Sequences of gastrins purified from a single antrum of dog and of goat.</title>
        <authorList>
            <person name="Bonato C."/>
            <person name="Eng J."/>
            <person name="Hulmes J.D."/>
            <person name="Miedel M."/>
            <person name="Pan Y.-C.E."/>
            <person name="Yalow R.S."/>
        </authorList>
    </citation>
    <scope>PROTEIN SEQUENCE OF 59-92</scope>
    <scope>PYROGLUTAMATE FORMATION AT GLN-59 AND GLN-76</scope>
    <scope>SULFATION AT TYR-87</scope>
    <scope>AMIDATION AT PHE-92</scope>
    <source>
        <tissue>Gastric mucosa</tissue>
    </source>
</reference>
<reference key="3">
    <citation type="journal article" date="1969" name="Experientia">
        <title>Structure and synthesis of canine gastrin.</title>
        <authorList>
            <person name="Agarwal K.L."/>
            <person name="Kenner G.W."/>
            <person name="Sheppard R.C."/>
        </authorList>
    </citation>
    <scope>PROTEIN SEQUENCE OF 76-92</scope>
    <scope>PHOSPHORYLATION</scope>
</reference>
<reference key="4">
    <citation type="journal article" date="1989" name="Regul. Pept.">
        <title>The constitution and properties of phosphorylated and unphosphorylated C-terminal fragments of progastrin from dog and ferret antrum.</title>
        <authorList>
            <person name="Desmond H."/>
            <person name="Varro A."/>
            <person name="Young J."/>
            <person name="Gregory H."/>
            <person name="Nemeth J."/>
            <person name="Dockray G.J."/>
        </authorList>
    </citation>
    <scope>PROTEIN SEQUENCE OF 96-104</scope>
    <scope>PHOSPHORYLATION AT SER-96</scope>
    <source>
        <tissue>Gastric mucosa</tissue>
    </source>
</reference>
<evidence type="ECO:0000255" key="1"/>
<evidence type="ECO:0000256" key="2">
    <source>
        <dbReference type="SAM" id="MobiDB-lite"/>
    </source>
</evidence>
<evidence type="ECO:0000269" key="3">
    <source>
    </source>
</evidence>
<evidence type="ECO:0000269" key="4">
    <source>
    </source>
</evidence>
<evidence type="ECO:0000305" key="5"/>
<feature type="signal peptide" evidence="1">
    <location>
        <begin position="1"/>
        <end position="21"/>
    </location>
</feature>
<feature type="propeptide" id="PRO_0000010613" evidence="4">
    <location>
        <begin position="22"/>
        <end position="58"/>
    </location>
</feature>
<feature type="peptide" id="PRO_0000010614" description="Big gastrin">
    <location>
        <begin position="59"/>
        <end position="92"/>
    </location>
</feature>
<feature type="peptide" id="PRO_0000010615" description="Gastrin">
    <location>
        <begin position="76"/>
        <end position="92"/>
    </location>
</feature>
<feature type="propeptide" id="PRO_0000010616">
    <location>
        <begin position="96"/>
        <end position="104"/>
    </location>
</feature>
<feature type="region of interest" description="Disordered" evidence="2">
    <location>
        <begin position="22"/>
        <end position="70"/>
    </location>
</feature>
<feature type="modified residue" description="Pyrrolidone carboxylic acid" evidence="4">
    <location>
        <position position="59"/>
    </location>
</feature>
<feature type="modified residue" description="Pyrrolidone carboxylic acid" evidence="4">
    <location>
        <position position="76"/>
    </location>
</feature>
<feature type="modified residue" description="Sulfotyrosine" evidence="4">
    <location>
        <position position="87"/>
    </location>
</feature>
<feature type="modified residue" description="Phenylalanine amide" evidence="4">
    <location>
        <position position="92"/>
    </location>
</feature>
<feature type="modified residue" description="Phosphoserine" evidence="3">
    <location>
        <position position="96"/>
    </location>
</feature>
<feature type="sequence variant">
    <original>A</original>
    <variation>T</variation>
    <location>
        <position position="85"/>
    </location>
</feature>
<feature type="sequence conflict" description="In Ref. 3; AA sequence." evidence="5" ref="3">
    <original>EEA</original>
    <variation>AEE</variation>
    <location>
        <begin position="83"/>
        <end position="85"/>
    </location>
</feature>
<proteinExistence type="evidence at protein level"/>
<name>GAST_CANLF</name>
<gene>
    <name type="primary">GAST</name>
    <name type="synonym">GAS</name>
</gene>